<dbReference type="EC" id="3.1.3.5" evidence="1"/>
<dbReference type="EMBL" id="CP000943">
    <property type="protein sequence ID" value="ACA20832.1"/>
    <property type="molecule type" value="Genomic_DNA"/>
</dbReference>
<dbReference type="RefSeq" id="WP_012336208.1">
    <property type="nucleotide sequence ID" value="NC_010511.1"/>
</dbReference>
<dbReference type="SMR" id="B0UD11"/>
<dbReference type="STRING" id="426117.M446_6576"/>
<dbReference type="KEGG" id="met:M446_6576"/>
<dbReference type="eggNOG" id="COG0496">
    <property type="taxonomic scope" value="Bacteria"/>
</dbReference>
<dbReference type="HOGENOM" id="CLU_045192_1_2_5"/>
<dbReference type="GO" id="GO:0005737">
    <property type="term" value="C:cytoplasm"/>
    <property type="evidence" value="ECO:0007669"/>
    <property type="project" value="UniProtKB-SubCell"/>
</dbReference>
<dbReference type="GO" id="GO:0008254">
    <property type="term" value="F:3'-nucleotidase activity"/>
    <property type="evidence" value="ECO:0007669"/>
    <property type="project" value="TreeGrafter"/>
</dbReference>
<dbReference type="GO" id="GO:0008253">
    <property type="term" value="F:5'-nucleotidase activity"/>
    <property type="evidence" value="ECO:0007669"/>
    <property type="project" value="UniProtKB-UniRule"/>
</dbReference>
<dbReference type="GO" id="GO:0004309">
    <property type="term" value="F:exopolyphosphatase activity"/>
    <property type="evidence" value="ECO:0007669"/>
    <property type="project" value="TreeGrafter"/>
</dbReference>
<dbReference type="GO" id="GO:0046872">
    <property type="term" value="F:metal ion binding"/>
    <property type="evidence" value="ECO:0007669"/>
    <property type="project" value="UniProtKB-UniRule"/>
</dbReference>
<dbReference type="GO" id="GO:0000166">
    <property type="term" value="F:nucleotide binding"/>
    <property type="evidence" value="ECO:0007669"/>
    <property type="project" value="UniProtKB-KW"/>
</dbReference>
<dbReference type="FunFam" id="3.40.1210.10:FF:000001">
    <property type="entry name" value="5'/3'-nucleotidase SurE"/>
    <property type="match status" value="1"/>
</dbReference>
<dbReference type="Gene3D" id="3.40.1210.10">
    <property type="entry name" value="Survival protein SurE-like phosphatase/nucleotidase"/>
    <property type="match status" value="1"/>
</dbReference>
<dbReference type="HAMAP" id="MF_00060">
    <property type="entry name" value="SurE"/>
    <property type="match status" value="1"/>
</dbReference>
<dbReference type="InterPro" id="IPR030048">
    <property type="entry name" value="SurE"/>
</dbReference>
<dbReference type="InterPro" id="IPR002828">
    <property type="entry name" value="SurE-like_Pase/nucleotidase"/>
</dbReference>
<dbReference type="InterPro" id="IPR036523">
    <property type="entry name" value="SurE-like_sf"/>
</dbReference>
<dbReference type="NCBIfam" id="NF001490">
    <property type="entry name" value="PRK00346.1-4"/>
    <property type="match status" value="1"/>
</dbReference>
<dbReference type="NCBIfam" id="TIGR00087">
    <property type="entry name" value="surE"/>
    <property type="match status" value="1"/>
</dbReference>
<dbReference type="PANTHER" id="PTHR30457">
    <property type="entry name" value="5'-NUCLEOTIDASE SURE"/>
    <property type="match status" value="1"/>
</dbReference>
<dbReference type="PANTHER" id="PTHR30457:SF12">
    <property type="entry name" value="5'_3'-NUCLEOTIDASE SURE"/>
    <property type="match status" value="1"/>
</dbReference>
<dbReference type="Pfam" id="PF01975">
    <property type="entry name" value="SurE"/>
    <property type="match status" value="1"/>
</dbReference>
<dbReference type="SUPFAM" id="SSF64167">
    <property type="entry name" value="SurE-like"/>
    <property type="match status" value="1"/>
</dbReference>
<accession>B0UD11</accession>
<sequence length="253" mass="27239">MRILVTNDDGIHAPGLKVLEEIARGLSDDVWVVAPETDQSGVSHSLSLNDPLRLRKVAETRFAVKGTPSDCVIMGVRHILKERGPDLVLSGVNRGQNVAEDVTYSGTVAGAMEGTILGVRSIALSQAYGAGGRAHVKWQTASHHGARTIRRILEAGIEPGILVNVNFPDCEPEAVEGIAVVAQGMRNQQLLAIDERVDGRGNPYFWLAFAKARFEPGHGTDLKAIAENRIAVTPLRLDLTDEPTLTRFAQALG</sequence>
<proteinExistence type="inferred from homology"/>
<feature type="chain" id="PRO_1000092020" description="5'-nucleotidase SurE">
    <location>
        <begin position="1"/>
        <end position="253"/>
    </location>
</feature>
<feature type="binding site" evidence="1">
    <location>
        <position position="8"/>
    </location>
    <ligand>
        <name>a divalent metal cation</name>
        <dbReference type="ChEBI" id="CHEBI:60240"/>
    </ligand>
</feature>
<feature type="binding site" evidence="1">
    <location>
        <position position="9"/>
    </location>
    <ligand>
        <name>a divalent metal cation</name>
        <dbReference type="ChEBI" id="CHEBI:60240"/>
    </ligand>
</feature>
<feature type="binding site" evidence="1">
    <location>
        <position position="40"/>
    </location>
    <ligand>
        <name>a divalent metal cation</name>
        <dbReference type="ChEBI" id="CHEBI:60240"/>
    </ligand>
</feature>
<feature type="binding site" evidence="1">
    <location>
        <position position="93"/>
    </location>
    <ligand>
        <name>a divalent metal cation</name>
        <dbReference type="ChEBI" id="CHEBI:60240"/>
    </ligand>
</feature>
<comment type="function">
    <text evidence="1">Nucleotidase that shows phosphatase activity on nucleoside 5'-monophosphates.</text>
</comment>
<comment type="catalytic activity">
    <reaction evidence="1">
        <text>a ribonucleoside 5'-phosphate + H2O = a ribonucleoside + phosphate</text>
        <dbReference type="Rhea" id="RHEA:12484"/>
        <dbReference type="ChEBI" id="CHEBI:15377"/>
        <dbReference type="ChEBI" id="CHEBI:18254"/>
        <dbReference type="ChEBI" id="CHEBI:43474"/>
        <dbReference type="ChEBI" id="CHEBI:58043"/>
        <dbReference type="EC" id="3.1.3.5"/>
    </reaction>
</comment>
<comment type="cofactor">
    <cofactor evidence="1">
        <name>a divalent metal cation</name>
        <dbReference type="ChEBI" id="CHEBI:60240"/>
    </cofactor>
    <text evidence="1">Binds 1 divalent metal cation per subunit.</text>
</comment>
<comment type="subcellular location">
    <subcellularLocation>
        <location evidence="1">Cytoplasm</location>
    </subcellularLocation>
</comment>
<comment type="similarity">
    <text evidence="1">Belongs to the SurE nucleotidase family.</text>
</comment>
<protein>
    <recommendedName>
        <fullName evidence="1">5'-nucleotidase SurE</fullName>
        <ecNumber evidence="1">3.1.3.5</ecNumber>
    </recommendedName>
    <alternativeName>
        <fullName evidence="1">Nucleoside 5'-monophosphate phosphohydrolase</fullName>
    </alternativeName>
</protein>
<reference key="1">
    <citation type="submission" date="2008-02" db="EMBL/GenBank/DDBJ databases">
        <title>Complete sequence of chromosome of Methylobacterium sp. 4-46.</title>
        <authorList>
            <consortium name="US DOE Joint Genome Institute"/>
            <person name="Copeland A."/>
            <person name="Lucas S."/>
            <person name="Lapidus A."/>
            <person name="Glavina del Rio T."/>
            <person name="Dalin E."/>
            <person name="Tice H."/>
            <person name="Bruce D."/>
            <person name="Goodwin L."/>
            <person name="Pitluck S."/>
            <person name="Chertkov O."/>
            <person name="Brettin T."/>
            <person name="Detter J.C."/>
            <person name="Han C."/>
            <person name="Kuske C.R."/>
            <person name="Schmutz J."/>
            <person name="Larimer F."/>
            <person name="Land M."/>
            <person name="Hauser L."/>
            <person name="Kyrpides N."/>
            <person name="Ivanova N."/>
            <person name="Marx C.J."/>
            <person name="Richardson P."/>
        </authorList>
    </citation>
    <scope>NUCLEOTIDE SEQUENCE [LARGE SCALE GENOMIC DNA]</scope>
    <source>
        <strain>4-46</strain>
    </source>
</reference>
<evidence type="ECO:0000255" key="1">
    <source>
        <dbReference type="HAMAP-Rule" id="MF_00060"/>
    </source>
</evidence>
<keyword id="KW-0963">Cytoplasm</keyword>
<keyword id="KW-0378">Hydrolase</keyword>
<keyword id="KW-0479">Metal-binding</keyword>
<keyword id="KW-0547">Nucleotide-binding</keyword>
<gene>
    <name evidence="1" type="primary">surE</name>
    <name type="ordered locus">M446_6576</name>
</gene>
<organism>
    <name type="scientific">Methylobacterium sp. (strain 4-46)</name>
    <dbReference type="NCBI Taxonomy" id="426117"/>
    <lineage>
        <taxon>Bacteria</taxon>
        <taxon>Pseudomonadati</taxon>
        <taxon>Pseudomonadota</taxon>
        <taxon>Alphaproteobacteria</taxon>
        <taxon>Hyphomicrobiales</taxon>
        <taxon>Methylobacteriaceae</taxon>
        <taxon>Methylobacterium</taxon>
    </lineage>
</organism>
<name>SURE_METS4</name>